<comment type="function">
    <text evidence="1">Blocks the elongation and depolymerization of the actin filaments at the pointed end. The Tmod/TM complex contributes to the formation of the short actin protofilament, which in turn defines the geometry of the membrane skeleton (By similarity).</text>
</comment>
<comment type="subunit">
    <text>Binds to the N-terminus of tropomyosin and to actin.</text>
</comment>
<comment type="subcellular location">
    <subcellularLocation>
        <location evidence="1">Cytoplasm</location>
        <location evidence="1">Cytoskeleton</location>
    </subcellularLocation>
</comment>
<comment type="alternative products">
    <event type="alternative splicing"/>
    <isoform>
        <id>Q9JKK7-1</id>
        <name>1</name>
        <sequence type="displayed"/>
    </isoform>
    <isoform>
        <id>Q9JKK7-2</id>
        <name>2</name>
        <sequence type="described" ref="VSP_024896 VSP_024897"/>
    </isoform>
    <isoform>
        <id>Q9JKK7-3</id>
        <name>3</name>
        <sequence type="described" ref="VSP_024895"/>
    </isoform>
</comment>
<comment type="tissue specificity">
    <text>Neuronal-tissue specific.</text>
</comment>
<comment type="similarity">
    <text evidence="4">Belongs to the tropomodulin family.</text>
</comment>
<reference key="1">
    <citation type="submission" date="2000-02" db="EMBL/GenBank/DDBJ databases">
        <title>Identifying novel tropomodulin isoforms.</title>
        <authorList>
            <person name="Conley C.A."/>
            <person name="Fowler V.M."/>
        </authorList>
    </citation>
    <scope>NUCLEOTIDE SEQUENCE [MRNA] (ISOFORM 1)</scope>
</reference>
<reference key="2">
    <citation type="journal article" date="2000" name="Genomics">
        <title>Sequencing, expression analysis, and mapping of three unique human tropomodulin genes and their mouse orthologs.</title>
        <authorList>
            <person name="Cox P.R."/>
            <person name="Zoghbi H.Y."/>
        </authorList>
    </citation>
    <scope>NUCLEOTIDE SEQUENCE [MRNA] (ISOFORM 1)</scope>
    <source>
        <strain>C57BL/6J</strain>
    </source>
</reference>
<reference key="3">
    <citation type="journal article" date="2005" name="Science">
        <title>The transcriptional landscape of the mammalian genome.</title>
        <authorList>
            <person name="Carninci P."/>
            <person name="Kasukawa T."/>
            <person name="Katayama S."/>
            <person name="Gough J."/>
            <person name="Frith M.C."/>
            <person name="Maeda N."/>
            <person name="Oyama R."/>
            <person name="Ravasi T."/>
            <person name="Lenhard B."/>
            <person name="Wells C."/>
            <person name="Kodzius R."/>
            <person name="Shimokawa K."/>
            <person name="Bajic V.B."/>
            <person name="Brenner S.E."/>
            <person name="Batalov S."/>
            <person name="Forrest A.R."/>
            <person name="Zavolan M."/>
            <person name="Davis M.J."/>
            <person name="Wilming L.G."/>
            <person name="Aidinis V."/>
            <person name="Allen J.E."/>
            <person name="Ambesi-Impiombato A."/>
            <person name="Apweiler R."/>
            <person name="Aturaliya R.N."/>
            <person name="Bailey T.L."/>
            <person name="Bansal M."/>
            <person name="Baxter L."/>
            <person name="Beisel K.W."/>
            <person name="Bersano T."/>
            <person name="Bono H."/>
            <person name="Chalk A.M."/>
            <person name="Chiu K.P."/>
            <person name="Choudhary V."/>
            <person name="Christoffels A."/>
            <person name="Clutterbuck D.R."/>
            <person name="Crowe M.L."/>
            <person name="Dalla E."/>
            <person name="Dalrymple B.P."/>
            <person name="de Bono B."/>
            <person name="Della Gatta G."/>
            <person name="di Bernardo D."/>
            <person name="Down T."/>
            <person name="Engstrom P."/>
            <person name="Fagiolini M."/>
            <person name="Faulkner G."/>
            <person name="Fletcher C.F."/>
            <person name="Fukushima T."/>
            <person name="Furuno M."/>
            <person name="Futaki S."/>
            <person name="Gariboldi M."/>
            <person name="Georgii-Hemming P."/>
            <person name="Gingeras T.R."/>
            <person name="Gojobori T."/>
            <person name="Green R.E."/>
            <person name="Gustincich S."/>
            <person name="Harbers M."/>
            <person name="Hayashi Y."/>
            <person name="Hensch T.K."/>
            <person name="Hirokawa N."/>
            <person name="Hill D."/>
            <person name="Huminiecki L."/>
            <person name="Iacono M."/>
            <person name="Ikeo K."/>
            <person name="Iwama A."/>
            <person name="Ishikawa T."/>
            <person name="Jakt M."/>
            <person name="Kanapin A."/>
            <person name="Katoh M."/>
            <person name="Kawasawa Y."/>
            <person name="Kelso J."/>
            <person name="Kitamura H."/>
            <person name="Kitano H."/>
            <person name="Kollias G."/>
            <person name="Krishnan S.P."/>
            <person name="Kruger A."/>
            <person name="Kummerfeld S.K."/>
            <person name="Kurochkin I.V."/>
            <person name="Lareau L.F."/>
            <person name="Lazarevic D."/>
            <person name="Lipovich L."/>
            <person name="Liu J."/>
            <person name="Liuni S."/>
            <person name="McWilliam S."/>
            <person name="Madan Babu M."/>
            <person name="Madera M."/>
            <person name="Marchionni L."/>
            <person name="Matsuda H."/>
            <person name="Matsuzawa S."/>
            <person name="Miki H."/>
            <person name="Mignone F."/>
            <person name="Miyake S."/>
            <person name="Morris K."/>
            <person name="Mottagui-Tabar S."/>
            <person name="Mulder N."/>
            <person name="Nakano N."/>
            <person name="Nakauchi H."/>
            <person name="Ng P."/>
            <person name="Nilsson R."/>
            <person name="Nishiguchi S."/>
            <person name="Nishikawa S."/>
            <person name="Nori F."/>
            <person name="Ohara O."/>
            <person name="Okazaki Y."/>
            <person name="Orlando V."/>
            <person name="Pang K.C."/>
            <person name="Pavan W.J."/>
            <person name="Pavesi G."/>
            <person name="Pesole G."/>
            <person name="Petrovsky N."/>
            <person name="Piazza S."/>
            <person name="Reed J."/>
            <person name="Reid J.F."/>
            <person name="Ring B.Z."/>
            <person name="Ringwald M."/>
            <person name="Rost B."/>
            <person name="Ruan Y."/>
            <person name="Salzberg S.L."/>
            <person name="Sandelin A."/>
            <person name="Schneider C."/>
            <person name="Schoenbach C."/>
            <person name="Sekiguchi K."/>
            <person name="Semple C.A."/>
            <person name="Seno S."/>
            <person name="Sessa L."/>
            <person name="Sheng Y."/>
            <person name="Shibata Y."/>
            <person name="Shimada H."/>
            <person name="Shimada K."/>
            <person name="Silva D."/>
            <person name="Sinclair B."/>
            <person name="Sperling S."/>
            <person name="Stupka E."/>
            <person name="Sugiura K."/>
            <person name="Sultana R."/>
            <person name="Takenaka Y."/>
            <person name="Taki K."/>
            <person name="Tammoja K."/>
            <person name="Tan S.L."/>
            <person name="Tang S."/>
            <person name="Taylor M.S."/>
            <person name="Tegner J."/>
            <person name="Teichmann S.A."/>
            <person name="Ueda H.R."/>
            <person name="van Nimwegen E."/>
            <person name="Verardo R."/>
            <person name="Wei C.L."/>
            <person name="Yagi K."/>
            <person name="Yamanishi H."/>
            <person name="Zabarovsky E."/>
            <person name="Zhu S."/>
            <person name="Zimmer A."/>
            <person name="Hide W."/>
            <person name="Bult C."/>
            <person name="Grimmond S.M."/>
            <person name="Teasdale R.D."/>
            <person name="Liu E.T."/>
            <person name="Brusic V."/>
            <person name="Quackenbush J."/>
            <person name="Wahlestedt C."/>
            <person name="Mattick J.S."/>
            <person name="Hume D.A."/>
            <person name="Kai C."/>
            <person name="Sasaki D."/>
            <person name="Tomaru Y."/>
            <person name="Fukuda S."/>
            <person name="Kanamori-Katayama M."/>
            <person name="Suzuki M."/>
            <person name="Aoki J."/>
            <person name="Arakawa T."/>
            <person name="Iida J."/>
            <person name="Imamura K."/>
            <person name="Itoh M."/>
            <person name="Kato T."/>
            <person name="Kawaji H."/>
            <person name="Kawagashira N."/>
            <person name="Kawashima T."/>
            <person name="Kojima M."/>
            <person name="Kondo S."/>
            <person name="Konno H."/>
            <person name="Nakano K."/>
            <person name="Ninomiya N."/>
            <person name="Nishio T."/>
            <person name="Okada M."/>
            <person name="Plessy C."/>
            <person name="Shibata K."/>
            <person name="Shiraki T."/>
            <person name="Suzuki S."/>
            <person name="Tagami M."/>
            <person name="Waki K."/>
            <person name="Watahiki A."/>
            <person name="Okamura-Oho Y."/>
            <person name="Suzuki H."/>
            <person name="Kawai J."/>
            <person name="Hayashizaki Y."/>
        </authorList>
    </citation>
    <scope>NUCLEOTIDE SEQUENCE [LARGE SCALE MRNA] (ISOFORMS 1; 2 AND 3)</scope>
    <source>
        <strain>C57BL/6J</strain>
        <tissue>Diencephalon</tissue>
        <tissue>Hippocampus</tissue>
        <tissue>Testis</tissue>
    </source>
</reference>
<reference key="4">
    <citation type="journal article" date="2004" name="Genome Res.">
        <title>The status, quality, and expansion of the NIH full-length cDNA project: the Mammalian Gene Collection (MGC).</title>
        <authorList>
            <consortium name="The MGC Project Team"/>
        </authorList>
    </citation>
    <scope>NUCLEOTIDE SEQUENCE [LARGE SCALE MRNA] (ISOFORM 1)</scope>
    <source>
        <tissue>Brain</tissue>
    </source>
</reference>
<reference key="5">
    <citation type="submission" date="2007-03" db="UniProtKB">
        <authorList>
            <person name="Lubec G."/>
            <person name="Klug S."/>
        </authorList>
    </citation>
    <scope>PROTEIN SEQUENCE OF 31-51; 82-93 AND 258-279</scope>
    <scope>IDENTIFICATION BY MASS SPECTROMETRY</scope>
    <source>
        <tissue>Hippocampus</tissue>
    </source>
</reference>
<reference key="6">
    <citation type="journal article" date="2010" name="Cell">
        <title>A tissue-specific atlas of mouse protein phosphorylation and expression.</title>
        <authorList>
            <person name="Huttlin E.L."/>
            <person name="Jedrychowski M.P."/>
            <person name="Elias J.E."/>
            <person name="Goswami T."/>
            <person name="Rad R."/>
            <person name="Beausoleil S.A."/>
            <person name="Villen J."/>
            <person name="Haas W."/>
            <person name="Sowa M.E."/>
            <person name="Gygi S.P."/>
        </authorList>
    </citation>
    <scope>IDENTIFICATION BY MASS SPECTROMETRY [LARGE SCALE ANALYSIS]</scope>
    <source>
        <tissue>Brain</tissue>
        <tissue>Testis</tissue>
    </source>
</reference>
<dbReference type="EMBL" id="AF237629">
    <property type="protein sequence ID" value="AAF45297.1"/>
    <property type="molecule type" value="mRNA"/>
</dbReference>
<dbReference type="EMBL" id="AF177170">
    <property type="protein sequence ID" value="AAF31669.1"/>
    <property type="molecule type" value="mRNA"/>
</dbReference>
<dbReference type="EMBL" id="AK015719">
    <property type="protein sequence ID" value="BAB29946.3"/>
    <property type="molecule type" value="mRNA"/>
</dbReference>
<dbReference type="EMBL" id="AK076562">
    <property type="protein sequence ID" value="BAC36394.1"/>
    <property type="molecule type" value="mRNA"/>
</dbReference>
<dbReference type="EMBL" id="AK079077">
    <property type="protein sequence ID" value="BAC37527.1"/>
    <property type="molecule type" value="mRNA"/>
</dbReference>
<dbReference type="EMBL" id="AK147581">
    <property type="protein sequence ID" value="BAE28007.1"/>
    <property type="molecule type" value="mRNA"/>
</dbReference>
<dbReference type="EMBL" id="AK164178">
    <property type="protein sequence ID" value="BAE37665.1"/>
    <property type="molecule type" value="mRNA"/>
</dbReference>
<dbReference type="EMBL" id="BC061124">
    <property type="protein sequence ID" value="AAH61124.1"/>
    <property type="molecule type" value="mRNA"/>
</dbReference>
<dbReference type="CCDS" id="CCDS23345.1">
    <molecule id="Q9JKK7-1"/>
</dbReference>
<dbReference type="RefSeq" id="NP_001033799.1">
    <molecule id="Q9JKK7-1"/>
    <property type="nucleotide sequence ID" value="NM_001038710.1"/>
</dbReference>
<dbReference type="RefSeq" id="NP_057920.2">
    <molecule id="Q9JKK7-1"/>
    <property type="nucleotide sequence ID" value="NM_016711.3"/>
</dbReference>
<dbReference type="RefSeq" id="XP_006511330.1">
    <molecule id="Q9JKK7-1"/>
    <property type="nucleotide sequence ID" value="XM_006511267.5"/>
</dbReference>
<dbReference type="RefSeq" id="XP_006511331.1">
    <molecule id="Q9JKK7-1"/>
    <property type="nucleotide sequence ID" value="XM_006511268.4"/>
</dbReference>
<dbReference type="RefSeq" id="XP_017168948.1">
    <property type="nucleotide sequence ID" value="XM_017313459.1"/>
</dbReference>
<dbReference type="RefSeq" id="XP_017168949.1">
    <property type="nucleotide sequence ID" value="XM_017313460.1"/>
</dbReference>
<dbReference type="RefSeq" id="XP_030100304.1">
    <molecule id="Q9JKK7-1"/>
    <property type="nucleotide sequence ID" value="XM_030244444.2"/>
</dbReference>
<dbReference type="RefSeq" id="XP_036010994.1">
    <molecule id="Q9JKK7-1"/>
    <property type="nucleotide sequence ID" value="XM_036155101.1"/>
</dbReference>
<dbReference type="SMR" id="Q9JKK7"/>
<dbReference type="BioGRID" id="206139">
    <property type="interactions" value="9"/>
</dbReference>
<dbReference type="FunCoup" id="Q9JKK7">
    <property type="interactions" value="546"/>
</dbReference>
<dbReference type="IntAct" id="Q9JKK7">
    <property type="interactions" value="5"/>
</dbReference>
<dbReference type="MINT" id="Q9JKK7"/>
<dbReference type="STRING" id="10090.ENSMUSP00000069956"/>
<dbReference type="GlyGen" id="Q9JKK7">
    <property type="glycosylation" value="1 site, 1 O-linked glycan (1 site)"/>
</dbReference>
<dbReference type="iPTMnet" id="Q9JKK7"/>
<dbReference type="MetOSite" id="Q9JKK7"/>
<dbReference type="PhosphoSitePlus" id="Q9JKK7"/>
<dbReference type="jPOST" id="Q9JKK7"/>
<dbReference type="PaxDb" id="10090-ENSMUSP00000096152"/>
<dbReference type="PeptideAtlas" id="Q9JKK7"/>
<dbReference type="ProteomicsDB" id="259438">
    <molecule id="Q9JKK7-1"/>
</dbReference>
<dbReference type="ProteomicsDB" id="259439">
    <molecule id="Q9JKK7-2"/>
</dbReference>
<dbReference type="ProteomicsDB" id="259440">
    <molecule id="Q9JKK7-3"/>
</dbReference>
<dbReference type="Antibodypedia" id="24900">
    <property type="antibodies" value="189 antibodies from 27 providers"/>
</dbReference>
<dbReference type="DNASU" id="50876"/>
<dbReference type="Ensembl" id="ENSMUST00000064433.11">
    <molecule id="Q9JKK7-1"/>
    <property type="protein sequence ID" value="ENSMUSP00000069956.4"/>
    <property type="gene ID" value="ENSMUSG00000032186.16"/>
</dbReference>
<dbReference type="Ensembl" id="ENSMUST00000098552.10">
    <molecule id="Q9JKK7-1"/>
    <property type="protein sequence ID" value="ENSMUSP00000096152.3"/>
    <property type="gene ID" value="ENSMUSG00000032186.16"/>
</dbReference>
<dbReference type="Ensembl" id="ENSMUST00000164100.2">
    <molecule id="Q9JKK7-1"/>
    <property type="protein sequence ID" value="ENSMUSP00000126739.2"/>
    <property type="gene ID" value="ENSMUSG00000032186.16"/>
</dbReference>
<dbReference type="Ensembl" id="ENSMUST00000215036.2">
    <molecule id="Q9JKK7-1"/>
    <property type="protein sequence ID" value="ENSMUSP00000150750.2"/>
    <property type="gene ID" value="ENSMUSG00000032186.16"/>
</dbReference>
<dbReference type="Ensembl" id="ENSMUST00000215614.2">
    <molecule id="Q9JKK7-1"/>
    <property type="protein sequence ID" value="ENSMUSP00000150413.2"/>
    <property type="gene ID" value="ENSMUSG00000032186.16"/>
</dbReference>
<dbReference type="GeneID" id="50876"/>
<dbReference type="KEGG" id="mmu:50876"/>
<dbReference type="UCSC" id="uc009qsj.1">
    <molecule id="Q9JKK7-1"/>
    <property type="organism name" value="mouse"/>
</dbReference>
<dbReference type="UCSC" id="uc009qsp.1">
    <molecule id="Q9JKK7-2"/>
    <property type="organism name" value="mouse"/>
</dbReference>
<dbReference type="AGR" id="MGI:1355335"/>
<dbReference type="CTD" id="29767"/>
<dbReference type="MGI" id="MGI:1355335">
    <property type="gene designation" value="Tmod2"/>
</dbReference>
<dbReference type="VEuPathDB" id="HostDB:ENSMUSG00000032186"/>
<dbReference type="eggNOG" id="KOG3735">
    <property type="taxonomic scope" value="Eukaryota"/>
</dbReference>
<dbReference type="GeneTree" id="ENSGT00940000160631"/>
<dbReference type="HOGENOM" id="CLU_031052_0_1_1"/>
<dbReference type="InParanoid" id="Q9JKK7"/>
<dbReference type="OMA" id="LEHQDRP"/>
<dbReference type="OrthoDB" id="2163268at2759"/>
<dbReference type="PhylomeDB" id="Q9JKK7"/>
<dbReference type="TreeFam" id="TF315841"/>
<dbReference type="Reactome" id="R-MMU-390522">
    <property type="pathway name" value="Striated Muscle Contraction"/>
</dbReference>
<dbReference type="BioGRID-ORCS" id="50876">
    <property type="hits" value="2 hits in 76 CRISPR screens"/>
</dbReference>
<dbReference type="CD-CODE" id="CE726F99">
    <property type="entry name" value="Postsynaptic density"/>
</dbReference>
<dbReference type="ChiTaRS" id="Tmod2">
    <property type="organism name" value="mouse"/>
</dbReference>
<dbReference type="PRO" id="PR:Q9JKK7"/>
<dbReference type="Proteomes" id="UP000000589">
    <property type="component" value="Chromosome 9"/>
</dbReference>
<dbReference type="RNAct" id="Q9JKK7">
    <property type="molecule type" value="protein"/>
</dbReference>
<dbReference type="Bgee" id="ENSMUSG00000032186">
    <property type="expression patterns" value="Expressed in lateral septal nucleus and 195 other cell types or tissues"/>
</dbReference>
<dbReference type="ExpressionAtlas" id="Q9JKK7">
    <property type="expression patterns" value="baseline and differential"/>
</dbReference>
<dbReference type="GO" id="GO:0005737">
    <property type="term" value="C:cytoplasm"/>
    <property type="evidence" value="ECO:0007669"/>
    <property type="project" value="UniProtKB-KW"/>
</dbReference>
<dbReference type="GO" id="GO:0005856">
    <property type="term" value="C:cytoskeleton"/>
    <property type="evidence" value="ECO:0007669"/>
    <property type="project" value="UniProtKB-SubCell"/>
</dbReference>
<dbReference type="GO" id="GO:0045202">
    <property type="term" value="C:synapse"/>
    <property type="evidence" value="ECO:0007669"/>
    <property type="project" value="GOC"/>
</dbReference>
<dbReference type="GO" id="GO:0003779">
    <property type="term" value="F:actin binding"/>
    <property type="evidence" value="ECO:0007669"/>
    <property type="project" value="UniProtKB-KW"/>
</dbReference>
<dbReference type="GO" id="GO:0005523">
    <property type="term" value="F:tropomyosin binding"/>
    <property type="evidence" value="ECO:0000266"/>
    <property type="project" value="MGI"/>
</dbReference>
<dbReference type="GO" id="GO:0007611">
    <property type="term" value="P:learning or memory"/>
    <property type="evidence" value="ECO:0000315"/>
    <property type="project" value="MGI"/>
</dbReference>
<dbReference type="GO" id="GO:0007270">
    <property type="term" value="P:neuron-neuron synaptic transmission"/>
    <property type="evidence" value="ECO:0000315"/>
    <property type="project" value="MGI"/>
</dbReference>
<dbReference type="GO" id="GO:0051694">
    <property type="term" value="P:pointed-end actin filament capping"/>
    <property type="evidence" value="ECO:0007669"/>
    <property type="project" value="InterPro"/>
</dbReference>
<dbReference type="GO" id="GO:0045745">
    <property type="term" value="P:positive regulation of G protein-coupled receptor signaling pathway"/>
    <property type="evidence" value="ECO:0000315"/>
    <property type="project" value="MGI"/>
</dbReference>
<dbReference type="FunFam" id="3.80.10.10:FF:000006">
    <property type="entry name" value="Tropomodulin 2"/>
    <property type="match status" value="1"/>
</dbReference>
<dbReference type="Gene3D" id="3.80.10.10">
    <property type="entry name" value="Ribonuclease Inhibitor"/>
    <property type="match status" value="1"/>
</dbReference>
<dbReference type="InterPro" id="IPR032675">
    <property type="entry name" value="LRR_dom_sf"/>
</dbReference>
<dbReference type="InterPro" id="IPR004934">
    <property type="entry name" value="TMOD"/>
</dbReference>
<dbReference type="PANTHER" id="PTHR10901">
    <property type="entry name" value="TROPOMODULIN"/>
    <property type="match status" value="1"/>
</dbReference>
<dbReference type="PANTHER" id="PTHR10901:SF15">
    <property type="entry name" value="TROPOMODULIN-2"/>
    <property type="match status" value="1"/>
</dbReference>
<dbReference type="Pfam" id="PF03250">
    <property type="entry name" value="Tropomodulin"/>
    <property type="match status" value="1"/>
</dbReference>
<dbReference type="SUPFAM" id="SSF52047">
    <property type="entry name" value="RNI-like"/>
    <property type="match status" value="1"/>
</dbReference>
<keyword id="KW-0009">Actin-binding</keyword>
<keyword id="KW-0025">Alternative splicing</keyword>
<keyword id="KW-0963">Cytoplasm</keyword>
<keyword id="KW-0206">Cytoskeleton</keyword>
<keyword id="KW-0903">Direct protein sequencing</keyword>
<keyword id="KW-0597">Phosphoprotein</keyword>
<keyword id="KW-1185">Reference proteome</keyword>
<gene>
    <name type="primary">Tmod2</name>
</gene>
<protein>
    <recommendedName>
        <fullName>Tropomodulin-2</fullName>
    </recommendedName>
    <alternativeName>
        <fullName>Neuronal tropomodulin</fullName>
        <shortName>N-Tmod</shortName>
    </alternativeName>
</protein>
<evidence type="ECO:0000250" key="1"/>
<evidence type="ECO:0000250" key="2">
    <source>
        <dbReference type="UniProtKB" id="P70566"/>
    </source>
</evidence>
<evidence type="ECO:0000303" key="3">
    <source>
    </source>
</evidence>
<evidence type="ECO:0000305" key="4"/>
<accession>Q9JKK7</accession>
<accession>Q3UH50</accession>
<accession>Q8BGX9</accession>
<accession>Q9CUK4</accession>
<accession>Q9JLH9</accession>
<organism>
    <name type="scientific">Mus musculus</name>
    <name type="common">Mouse</name>
    <dbReference type="NCBI Taxonomy" id="10090"/>
    <lineage>
        <taxon>Eukaryota</taxon>
        <taxon>Metazoa</taxon>
        <taxon>Chordata</taxon>
        <taxon>Craniata</taxon>
        <taxon>Vertebrata</taxon>
        <taxon>Euteleostomi</taxon>
        <taxon>Mammalia</taxon>
        <taxon>Eutheria</taxon>
        <taxon>Euarchontoglires</taxon>
        <taxon>Glires</taxon>
        <taxon>Rodentia</taxon>
        <taxon>Myomorpha</taxon>
        <taxon>Muroidea</taxon>
        <taxon>Muridae</taxon>
        <taxon>Murinae</taxon>
        <taxon>Mus</taxon>
        <taxon>Mus</taxon>
    </lineage>
</organism>
<proteinExistence type="evidence at protein level"/>
<feature type="chain" id="PRO_0000186132" description="Tropomodulin-2">
    <location>
        <begin position="1"/>
        <end position="351"/>
    </location>
</feature>
<feature type="modified residue" description="Phosphoserine" evidence="2">
    <location>
        <position position="25"/>
    </location>
</feature>
<feature type="splice variant" id="VSP_024895" description="In isoform 3." evidence="3">
    <location>
        <begin position="1"/>
        <end position="191"/>
    </location>
</feature>
<feature type="splice variant" id="VSP_024896" description="In isoform 2." evidence="3">
    <original>NVVKGEKAKPVFEEPPNPTNVEASLQQMKANDPSLQEVNLNNIKNIPIPTLKEFAKSLETNTHVKKFSLAATRSND</original>
    <variation>SKLTRALGAWEVPEPAWCMFHQAQCLVSASPSVVTQGTQSYRTHIRGTSSSGEKKSIPDKFAQSAQNANKVFCSKG</variation>
    <location>
        <begin position="165"/>
        <end position="240"/>
    </location>
</feature>
<feature type="splice variant" id="VSP_024897" description="In isoform 2." evidence="3">
    <location>
        <begin position="241"/>
        <end position="351"/>
    </location>
</feature>
<feature type="sequence conflict" description="In Ref. 3; BAB29946." evidence="4" ref="3">
    <original>EE</original>
    <variation>KR</variation>
    <location>
        <begin position="26"/>
        <end position="27"/>
    </location>
</feature>
<feature type="sequence conflict" description="In Ref. 3; BAB29946." evidence="4" ref="3">
    <original>E</original>
    <variation>K</variation>
    <location>
        <position position="42"/>
    </location>
</feature>
<feature type="sequence conflict" description="In Ref. 1; AAF45297." evidence="4" ref="1">
    <original>E</original>
    <variation>Q</variation>
    <location>
        <position position="157"/>
    </location>
</feature>
<feature type="sequence conflict" description="In Ref. 2; AAF31669." evidence="4" ref="2">
    <original>S</original>
    <variation>F</variation>
    <location>
        <position position="263"/>
    </location>
</feature>
<name>TMOD2_MOUSE</name>
<sequence>MALPFQKGLEKYKNIDEDELLGKLSEEELKQLENVLDDLDPESATLPAGFRQKDQTQKAATGPFDREHLLMYLEKEALEQKDREDFVPFTGEKKGRVFIPKEKPVETRKEEKVTLDPELEEALASASDTELYDLAAVLGVHNLLNNPKFDEETTNGEGRKGPVRNVVKGEKAKPVFEEPPNPTNVEASLQQMKANDPSLQEVNLNNIKNIPIPTLKEFAKSLETNTHVKKFSLAATRSNDPVALAFAEMLKVNKTLKSLNVESNFITGTGILALVEALRENDTLTEIKIDNQRQQLGTAVEMEIAQMLEENSRILKFGYQFTKQGPRTRVAAAITKNNDLVRKKRVEGDRR</sequence>